<reference key="1">
    <citation type="journal article" date="1994" name="Neuron">
        <title>A post-docking role for synaptobrevin in synaptic vesicle fusion.</title>
        <authorList>
            <person name="Hunt J.M."/>
            <person name="Bommert K."/>
            <person name="Charlton M.P."/>
            <person name="Kistner A."/>
            <person name="Habermann E."/>
            <person name="Augustine G.J."/>
            <person name="Betz H."/>
        </authorList>
    </citation>
    <scope>NUCLEOTIDE SEQUENCE [MRNA]</scope>
</reference>
<dbReference type="EMBL" id="X74748">
    <property type="protein sequence ID" value="CAA52766.1"/>
    <property type="molecule type" value="mRNA"/>
</dbReference>
<dbReference type="PIR" id="S40153">
    <property type="entry name" value="S40153"/>
</dbReference>
<dbReference type="PDB" id="1L4A">
    <property type="method" value="X-ray"/>
    <property type="resolution" value="2.95 A"/>
    <property type="chains" value="A=25-104"/>
</dbReference>
<dbReference type="PDBsum" id="1L4A"/>
<dbReference type="SMR" id="P47194"/>
<dbReference type="IntAct" id="P47194">
    <property type="interactions" value="1"/>
</dbReference>
<dbReference type="MINT" id="P47194"/>
<dbReference type="EvolutionaryTrace" id="P47194"/>
<dbReference type="GO" id="GO:0043005">
    <property type="term" value="C:neuron projection"/>
    <property type="evidence" value="ECO:0007669"/>
    <property type="project" value="UniProtKB-KW"/>
</dbReference>
<dbReference type="GO" id="GO:0030672">
    <property type="term" value="C:synaptic vesicle membrane"/>
    <property type="evidence" value="ECO:0007669"/>
    <property type="project" value="UniProtKB-SubCell"/>
</dbReference>
<dbReference type="GO" id="GO:0016192">
    <property type="term" value="P:vesicle-mediated transport"/>
    <property type="evidence" value="ECO:0007669"/>
    <property type="project" value="InterPro"/>
</dbReference>
<dbReference type="CDD" id="cd15870">
    <property type="entry name" value="R-SNARE_VAMP2"/>
    <property type="match status" value="1"/>
</dbReference>
<dbReference type="FunFam" id="1.20.5.110:FF:000013">
    <property type="entry name" value="Vesicle-associated membrane protein 2"/>
    <property type="match status" value="1"/>
</dbReference>
<dbReference type="Gene3D" id="1.20.5.110">
    <property type="match status" value="1"/>
</dbReference>
<dbReference type="InterPro" id="IPR001388">
    <property type="entry name" value="Synaptobrevin-like"/>
</dbReference>
<dbReference type="InterPro" id="IPR016444">
    <property type="entry name" value="Synaptobrevin/VAMP"/>
</dbReference>
<dbReference type="InterPro" id="IPR042855">
    <property type="entry name" value="V_SNARE_CC"/>
</dbReference>
<dbReference type="PANTHER" id="PTHR45701">
    <property type="entry name" value="SYNAPTOBREVIN FAMILY MEMBER"/>
    <property type="match status" value="1"/>
</dbReference>
<dbReference type="Pfam" id="PF00957">
    <property type="entry name" value="Synaptobrevin"/>
    <property type="match status" value="1"/>
</dbReference>
<dbReference type="PRINTS" id="PR00219">
    <property type="entry name" value="SYNAPTOBREVN"/>
</dbReference>
<dbReference type="SUPFAM" id="SSF58038">
    <property type="entry name" value="SNARE fusion complex"/>
    <property type="match status" value="1"/>
</dbReference>
<dbReference type="PROSITE" id="PS00417">
    <property type="entry name" value="SYNAPTOBREVIN"/>
    <property type="match status" value="1"/>
</dbReference>
<dbReference type="PROSITE" id="PS50892">
    <property type="entry name" value="V_SNARE"/>
    <property type="match status" value="1"/>
</dbReference>
<organism>
    <name type="scientific">Doryteuthis pealeii</name>
    <name type="common">Longfin inshore squid</name>
    <name type="synonym">Loligo pealeii</name>
    <dbReference type="NCBI Taxonomy" id="1051067"/>
    <lineage>
        <taxon>Eukaryota</taxon>
        <taxon>Metazoa</taxon>
        <taxon>Spiralia</taxon>
        <taxon>Lophotrochozoa</taxon>
        <taxon>Mollusca</taxon>
        <taxon>Cephalopoda</taxon>
        <taxon>Coleoidea</taxon>
        <taxon>Decapodiformes</taxon>
        <taxon>Myopsida</taxon>
        <taxon>Loliginidae</taxon>
        <taxon>Doryteuthis</taxon>
    </lineage>
</organism>
<feature type="chain" id="PRO_0000206742" description="Synaptobrevin">
    <location>
        <begin position="1"/>
        <end position="125"/>
    </location>
</feature>
<feature type="topological domain" description="Cytoplasmic" evidence="1">
    <location>
        <begin position="1"/>
        <end position="103"/>
    </location>
</feature>
<feature type="transmembrane region" description="Helical; Anchor for type IV membrane protein" evidence="1">
    <location>
        <begin position="104"/>
        <end position="123"/>
    </location>
</feature>
<feature type="topological domain" description="Vesicular" evidence="1">
    <location>
        <begin position="124"/>
        <end position="125"/>
    </location>
</feature>
<feature type="domain" description="v-SNARE coiled-coil homology" evidence="2">
    <location>
        <begin position="40"/>
        <end position="100"/>
    </location>
</feature>
<feature type="region of interest" description="Disordered" evidence="3">
    <location>
        <begin position="1"/>
        <end position="46"/>
    </location>
</feature>
<feature type="compositionally biased region" description="Pro residues" evidence="3">
    <location>
        <begin position="12"/>
        <end position="34"/>
    </location>
</feature>
<feature type="helix" evidence="5">
    <location>
        <begin position="40"/>
        <end position="77"/>
    </location>
</feature>
<feature type="turn" evidence="5">
    <location>
        <begin position="78"/>
        <end position="82"/>
    </location>
</feature>
<feature type="turn" evidence="5">
    <location>
        <begin position="84"/>
        <end position="87"/>
    </location>
</feature>
<feature type="helix" evidence="5">
    <location>
        <begin position="88"/>
        <end position="96"/>
    </location>
</feature>
<proteinExistence type="evidence at protein level"/>
<name>SYB_DORPE</name>
<protein>
    <recommendedName>
        <fullName>Synaptobrevin</fullName>
    </recommendedName>
</protein>
<comment type="function">
    <text>Intrinsic membrane protein of small synaptic vesicles.</text>
</comment>
<comment type="subcellular location">
    <subcellularLocation>
        <location>Cytoplasmic vesicle</location>
        <location>Secretory vesicle</location>
        <location>Synaptic vesicle membrane</location>
        <topology>Single-pass type IV membrane protein</topology>
    </subcellularLocation>
    <subcellularLocation>
        <location>Synapse</location>
        <location>Synaptosome</location>
    </subcellularLocation>
    <text>Neuronal synaptic vesicles.</text>
</comment>
<comment type="similarity">
    <text evidence="4">Belongs to the synaptobrevin family.</text>
</comment>
<sequence length="125" mass="13316">MSGPQNPQAGPGGPPSGPPQPGGPPGPPQGPPQPVQQSKRLQQTQAQVEEVVDIMRVNVDKVLERDSKISELDDRADALQAGASQFEASAGKLKRKFWWKNCKMMIILGGIVAVIVTVIIVWAAT</sequence>
<evidence type="ECO:0000255" key="1"/>
<evidence type="ECO:0000255" key="2">
    <source>
        <dbReference type="PROSITE-ProRule" id="PRU00290"/>
    </source>
</evidence>
<evidence type="ECO:0000256" key="3">
    <source>
        <dbReference type="SAM" id="MobiDB-lite"/>
    </source>
</evidence>
<evidence type="ECO:0000305" key="4"/>
<evidence type="ECO:0007829" key="5">
    <source>
        <dbReference type="PDB" id="1L4A"/>
    </source>
</evidence>
<accession>P47194</accession>
<keyword id="KW-0002">3D-structure</keyword>
<keyword id="KW-0175">Coiled coil</keyword>
<keyword id="KW-0968">Cytoplasmic vesicle</keyword>
<keyword id="KW-0472">Membrane</keyword>
<keyword id="KW-0770">Synapse</keyword>
<keyword id="KW-0771">Synaptosome</keyword>
<keyword id="KW-0812">Transmembrane</keyword>
<keyword id="KW-1133">Transmembrane helix</keyword>